<feature type="chain" id="PRO_0000455599" description="GTPase-GDP dissociation stimulator vimar">
    <location>
        <begin position="1"/>
        <end position="635"/>
    </location>
</feature>
<feature type="repeat" description="ARM 1" evidence="2">
    <location>
        <begin position="72"/>
        <end position="118"/>
    </location>
</feature>
<feature type="repeat" description="ARM 2" evidence="2">
    <location>
        <begin position="346"/>
        <end position="391"/>
    </location>
</feature>
<feature type="repeat" description="ARM 3" evidence="2">
    <location>
        <begin position="392"/>
        <end position="432"/>
    </location>
</feature>
<feature type="repeat" description="ARM 4" evidence="2">
    <location>
        <begin position="510"/>
        <end position="550"/>
    </location>
</feature>
<feature type="sequence conflict" description="In Ref. 5; AAF57418/ADX35945 and 1; AAB87984." evidence="5" ref="5 1">
    <original>MATA</original>
    <variation>MAT</variation>
    <location>
        <begin position="1"/>
        <end position="4"/>
    </location>
</feature>
<feature type="sequence conflict" description="In Ref. 1; AAB87984 and 4; AAL40010." evidence="5" ref="1 4">
    <original>S</original>
    <variation>A</variation>
    <location>
        <position position="218"/>
    </location>
</feature>
<feature type="sequence conflict" description="In Ref. 5; AAO47869." evidence="5" ref="5">
    <original>E</original>
    <variation>G</variation>
    <location>
        <position position="621"/>
    </location>
</feature>
<comment type="function">
    <text evidence="1 3">Probably acts as a GEF (guanine nucleotide exchange factor) for the Rho family of small GTP-binding proteins (G proteins) that stimulates the dissociation of GDP to enable subsequent binding of GTP (By similarity). May also chaperone the processing and/or trafficking of small GTPases independently of GEF activity (By similarity). By interacting with Miro, promotes mitochondrial fission in response to high calcium concentrations (PubMed:27716788).</text>
</comment>
<comment type="subunit">
    <text evidence="3">Interacts with Miro.</text>
</comment>
<comment type="interaction">
    <interactant intactId="EBI-86723">
        <id>A1Z6S7</id>
    </interactant>
    <interactant intactId="EBI-167586">
        <id>Q8IMX7</id>
        <label>Miro</label>
    </interactant>
    <organismsDiffer>false</organismsDiffer>
    <experiments>2</experiments>
</comment>
<comment type="subcellular location">
    <subcellularLocation>
        <location evidence="3">Endoplasmic reticulum</location>
    </subcellularLocation>
    <subcellularLocation>
        <location evidence="3">Mitochondrion</location>
    </subcellularLocation>
    <subcellularLocation>
        <location evidence="3">Cytoplasm</location>
        <location evidence="3">Cytosol</location>
    </subcellularLocation>
</comment>
<comment type="developmental stage">
    <text evidence="4">Expressed in the mesoderm during embryogenesis.</text>
</comment>
<comment type="disruption phenotype">
    <text evidence="3">RNAi-mediated knockdown perturbs mitochondrial distribution and dynamics.</text>
</comment>
<comment type="sequence caution" evidence="5">
    <conflict type="erroneous initiation">
        <sequence resource="EMBL-CDS" id="AAL40010"/>
    </conflict>
    <text>Truncated N-terminus.</text>
</comment>
<protein>
    <recommendedName>
        <fullName evidence="5">GTPase-GDP dissociation stimulator vimar</fullName>
    </recommendedName>
</protein>
<sequence length="635" mass="70325">MATAEIDDLIEKLKTTSVSPANTTNLLCEISATKDPKLFDKHELAECFLGLTKCDDTNVRKEAAKCIAEITKSEVQRKKFTKRNIIAAFLECLRQVPTSDGSMELPIQICRALGNICYLNDEARDLILELEGDAVLLRLLDITTIEDVANAAQFIKVRGGLLSNYLLGGEGLAKRAMELGVMKKLQGIIDIGASNVEQHEDLLLNTLPLLSILTENVSDLNFDSSLNIQLSRILAASTNPDLAEMCLELLHYQAESDEVKLILAKDGLCETIYNLLEKYKTLASTSEARALMKLACELIVLILTGDDSMHYLYTTPLLKNMVDWLDSTDIDLLTTGVLALGNFARTDSHCIYFVEQQTMNKLLEVLAKNNGVKDDVRLQHALLSALRNLVIPKPNKNAVIQAGLVQTILPMLEIHQPPVVFKLLGTLRMTVDGQEKLALELLKNKTLIEQLVHWSKSSDYAGVTGESLRLMAWLIKHAYLSKIAYALPRKGDAPAEQIADKIPLTQDYDRSSLSEFLANEGTVEAMVSMLTAQHLVMQNEALIALCILSVVYLSQPSEAAQAQLLQDELVKCEVGKKLAELISKSSDTMTKEIVENLQNCVNLLKSSEQLVAHLEQHNINELLKSIPILTEYCTL</sequence>
<accession>A1Z6S7</accession>
<accession>A1Z6S6</accession>
<accession>O44116</accession>
<accession>Q86LF4</accession>
<accession>Q8T996</accession>
<evidence type="ECO:0000250" key="1">
    <source>
        <dbReference type="UniProtKB" id="P52306"/>
    </source>
</evidence>
<evidence type="ECO:0000255" key="2"/>
<evidence type="ECO:0000269" key="3">
    <source>
    </source>
</evidence>
<evidence type="ECO:0000269" key="4">
    <source>
    </source>
</evidence>
<evidence type="ECO:0000305" key="5"/>
<evidence type="ECO:0000312" key="6">
    <source>
        <dbReference type="EMBL" id="AAB87984.1"/>
    </source>
</evidence>
<evidence type="ECO:0000312" key="7">
    <source>
        <dbReference type="EMBL" id="AAL40010.1"/>
    </source>
</evidence>
<evidence type="ECO:0000312" key="8">
    <source>
        <dbReference type="EMBL" id="AAO47869.1"/>
    </source>
</evidence>
<evidence type="ECO:0000312" key="9">
    <source>
        <dbReference type="EMBL" id="ACI15753.1"/>
    </source>
</evidence>
<evidence type="ECO:0000312" key="10">
    <source>
        <dbReference type="EMBL" id="ADX35945.1"/>
    </source>
</evidence>
<evidence type="ECO:0000312" key="11">
    <source>
        <dbReference type="FlyBase" id="FBgn0022960"/>
    </source>
</evidence>
<evidence type="ECO:0000312" key="12">
    <source>
        <dbReference type="Proteomes" id="UP000000803"/>
    </source>
</evidence>
<name>GDS1_DROME</name>
<reference evidence="6" key="1">
    <citation type="journal article" date="1998" name="Mech. Dev.">
        <title>bagpipe-Dependent expression of vimar, a novel Armadillo-repeats gene, in Drosophila visceral mesoderm.</title>
        <authorList>
            <person name="Lo P.C."/>
            <person name="Frasch M."/>
        </authorList>
    </citation>
    <scope>NUCLEOTIDE SEQUENCE [MRNA]</scope>
    <scope>DEVELOPMENTAL STAGE</scope>
</reference>
<reference evidence="12" key="2">
    <citation type="journal article" date="2000" name="Science">
        <title>The genome sequence of Drosophila melanogaster.</title>
        <authorList>
            <person name="Adams M.D."/>
            <person name="Celniker S.E."/>
            <person name="Holt R.A."/>
            <person name="Evans C.A."/>
            <person name="Gocayne J.D."/>
            <person name="Amanatides P.G."/>
            <person name="Scherer S.E."/>
            <person name="Li P.W."/>
            <person name="Hoskins R.A."/>
            <person name="Galle R.F."/>
            <person name="George R.A."/>
            <person name="Lewis S.E."/>
            <person name="Richards S."/>
            <person name="Ashburner M."/>
            <person name="Henderson S.N."/>
            <person name="Sutton G.G."/>
            <person name="Wortman J.R."/>
            <person name="Yandell M.D."/>
            <person name="Zhang Q."/>
            <person name="Chen L.X."/>
            <person name="Brandon R.C."/>
            <person name="Rogers Y.-H.C."/>
            <person name="Blazej R.G."/>
            <person name="Champe M."/>
            <person name="Pfeiffer B.D."/>
            <person name="Wan K.H."/>
            <person name="Doyle C."/>
            <person name="Baxter E.G."/>
            <person name="Helt G."/>
            <person name="Nelson C.R."/>
            <person name="Miklos G.L.G."/>
            <person name="Abril J.F."/>
            <person name="Agbayani A."/>
            <person name="An H.-J."/>
            <person name="Andrews-Pfannkoch C."/>
            <person name="Baldwin D."/>
            <person name="Ballew R.M."/>
            <person name="Basu A."/>
            <person name="Baxendale J."/>
            <person name="Bayraktaroglu L."/>
            <person name="Beasley E.M."/>
            <person name="Beeson K.Y."/>
            <person name="Benos P.V."/>
            <person name="Berman B.P."/>
            <person name="Bhandari D."/>
            <person name="Bolshakov S."/>
            <person name="Borkova D."/>
            <person name="Botchan M.R."/>
            <person name="Bouck J."/>
            <person name="Brokstein P."/>
            <person name="Brottier P."/>
            <person name="Burtis K.C."/>
            <person name="Busam D.A."/>
            <person name="Butler H."/>
            <person name="Cadieu E."/>
            <person name="Center A."/>
            <person name="Chandra I."/>
            <person name="Cherry J.M."/>
            <person name="Cawley S."/>
            <person name="Dahlke C."/>
            <person name="Davenport L.B."/>
            <person name="Davies P."/>
            <person name="de Pablos B."/>
            <person name="Delcher A."/>
            <person name="Deng Z."/>
            <person name="Mays A.D."/>
            <person name="Dew I."/>
            <person name="Dietz S.M."/>
            <person name="Dodson K."/>
            <person name="Doup L.E."/>
            <person name="Downes M."/>
            <person name="Dugan-Rocha S."/>
            <person name="Dunkov B.C."/>
            <person name="Dunn P."/>
            <person name="Durbin K.J."/>
            <person name="Evangelista C.C."/>
            <person name="Ferraz C."/>
            <person name="Ferriera S."/>
            <person name="Fleischmann W."/>
            <person name="Fosler C."/>
            <person name="Gabrielian A.E."/>
            <person name="Garg N.S."/>
            <person name="Gelbart W.M."/>
            <person name="Glasser K."/>
            <person name="Glodek A."/>
            <person name="Gong F."/>
            <person name="Gorrell J.H."/>
            <person name="Gu Z."/>
            <person name="Guan P."/>
            <person name="Harris M."/>
            <person name="Harris N.L."/>
            <person name="Harvey D.A."/>
            <person name="Heiman T.J."/>
            <person name="Hernandez J.R."/>
            <person name="Houck J."/>
            <person name="Hostin D."/>
            <person name="Houston K.A."/>
            <person name="Howland T.J."/>
            <person name="Wei M.-H."/>
            <person name="Ibegwam C."/>
            <person name="Jalali M."/>
            <person name="Kalush F."/>
            <person name="Karpen G.H."/>
            <person name="Ke Z."/>
            <person name="Kennison J.A."/>
            <person name="Ketchum K.A."/>
            <person name="Kimmel B.E."/>
            <person name="Kodira C.D."/>
            <person name="Kraft C.L."/>
            <person name="Kravitz S."/>
            <person name="Kulp D."/>
            <person name="Lai Z."/>
            <person name="Lasko P."/>
            <person name="Lei Y."/>
            <person name="Levitsky A.A."/>
            <person name="Li J.H."/>
            <person name="Li Z."/>
            <person name="Liang Y."/>
            <person name="Lin X."/>
            <person name="Liu X."/>
            <person name="Mattei B."/>
            <person name="McIntosh T.C."/>
            <person name="McLeod M.P."/>
            <person name="McPherson D."/>
            <person name="Merkulov G."/>
            <person name="Milshina N.V."/>
            <person name="Mobarry C."/>
            <person name="Morris J."/>
            <person name="Moshrefi A."/>
            <person name="Mount S.M."/>
            <person name="Moy M."/>
            <person name="Murphy B."/>
            <person name="Murphy L."/>
            <person name="Muzny D.M."/>
            <person name="Nelson D.L."/>
            <person name="Nelson D.R."/>
            <person name="Nelson K.A."/>
            <person name="Nixon K."/>
            <person name="Nusskern D.R."/>
            <person name="Pacleb J.M."/>
            <person name="Palazzolo M."/>
            <person name="Pittman G.S."/>
            <person name="Pan S."/>
            <person name="Pollard J."/>
            <person name="Puri V."/>
            <person name="Reese M.G."/>
            <person name="Reinert K."/>
            <person name="Remington K."/>
            <person name="Saunders R.D.C."/>
            <person name="Scheeler F."/>
            <person name="Shen H."/>
            <person name="Shue B.C."/>
            <person name="Siden-Kiamos I."/>
            <person name="Simpson M."/>
            <person name="Skupski M.P."/>
            <person name="Smith T.J."/>
            <person name="Spier E."/>
            <person name="Spradling A.C."/>
            <person name="Stapleton M."/>
            <person name="Strong R."/>
            <person name="Sun E."/>
            <person name="Svirskas R."/>
            <person name="Tector C."/>
            <person name="Turner R."/>
            <person name="Venter E."/>
            <person name="Wang A.H."/>
            <person name="Wang X."/>
            <person name="Wang Z.-Y."/>
            <person name="Wassarman D.A."/>
            <person name="Weinstock G.M."/>
            <person name="Weissenbach J."/>
            <person name="Williams S.M."/>
            <person name="Woodage T."/>
            <person name="Worley K.C."/>
            <person name="Wu D."/>
            <person name="Yang S."/>
            <person name="Yao Q.A."/>
            <person name="Ye J."/>
            <person name="Yeh R.-F."/>
            <person name="Zaveri J.S."/>
            <person name="Zhan M."/>
            <person name="Zhang G."/>
            <person name="Zhao Q."/>
            <person name="Zheng L."/>
            <person name="Zheng X.H."/>
            <person name="Zhong F.N."/>
            <person name="Zhong W."/>
            <person name="Zhou X."/>
            <person name="Zhu S.C."/>
            <person name="Zhu X."/>
            <person name="Smith H.O."/>
            <person name="Gibbs R.A."/>
            <person name="Myers E.W."/>
            <person name="Rubin G.M."/>
            <person name="Venter J.C."/>
        </authorList>
    </citation>
    <scope>NUCLEOTIDE SEQUENCE [LARGE SCALE GENOMIC DNA]</scope>
    <source>
        <strain evidence="12">Berkeley</strain>
    </source>
</reference>
<reference evidence="12" key="3">
    <citation type="journal article" date="2002" name="Genome Biol.">
        <title>Annotation of the Drosophila melanogaster euchromatic genome: a systematic review.</title>
        <authorList>
            <person name="Misra S."/>
            <person name="Crosby M.A."/>
            <person name="Mungall C.J."/>
            <person name="Matthews B.B."/>
            <person name="Campbell K.S."/>
            <person name="Hradecky P."/>
            <person name="Huang Y."/>
            <person name="Kaminker J.S."/>
            <person name="Millburn G.H."/>
            <person name="Prochnik S.E."/>
            <person name="Smith C.D."/>
            <person name="Tupy J.L."/>
            <person name="Whitfield E.J."/>
            <person name="Bayraktaroglu L."/>
            <person name="Berman B.P."/>
            <person name="Bettencourt B.R."/>
            <person name="Celniker S.E."/>
            <person name="de Grey A.D.N.J."/>
            <person name="Drysdale R.A."/>
            <person name="Harris N.L."/>
            <person name="Richter J."/>
            <person name="Russo S."/>
            <person name="Schroeder A.J."/>
            <person name="Shu S.Q."/>
            <person name="Stapleton M."/>
            <person name="Yamada C."/>
            <person name="Ashburner M."/>
            <person name="Gelbart W.M."/>
            <person name="Rubin G.M."/>
            <person name="Lewis S.E."/>
        </authorList>
    </citation>
    <scope>GENOME REANNOTATION</scope>
    <source>
        <strain evidence="12">Berkeley</strain>
    </source>
</reference>
<reference evidence="7" key="4">
    <citation type="journal article" date="2002" name="Genome Biol.">
        <title>A Drosophila full-length cDNA resource.</title>
        <authorList>
            <person name="Stapleton M."/>
            <person name="Carlson J.W."/>
            <person name="Brokstein P."/>
            <person name="Yu C."/>
            <person name="Champe M."/>
            <person name="George R.A."/>
            <person name="Guarin H."/>
            <person name="Kronmiller B."/>
            <person name="Pacleb J.M."/>
            <person name="Park S."/>
            <person name="Wan K.H."/>
            <person name="Rubin G.M."/>
            <person name="Celniker S.E."/>
        </authorList>
    </citation>
    <scope>NUCLEOTIDE SEQUENCE [LARGE SCALE MRNA]</scope>
    <source>
        <strain evidence="7">Berkeley</strain>
        <tissue evidence="7">Embryo</tissue>
    </source>
</reference>
<reference evidence="8 9 10" key="5">
    <citation type="submission" date="2011-02" db="EMBL/GenBank/DDBJ databases">
        <authorList>
            <person name="Stapleton M."/>
            <person name="Brokstein P."/>
            <person name="Hong L."/>
            <person name="Agbayani A."/>
            <person name="Carlson J."/>
            <person name="Champe M."/>
            <person name="Chavez C."/>
            <person name="Dorsett V."/>
            <person name="Dresnek D."/>
            <person name="Farfan D."/>
            <person name="Frise E."/>
            <person name="George R."/>
            <person name="Gonzalez M."/>
            <person name="Guarin H."/>
            <person name="Kronmiller B."/>
            <person name="Li P."/>
            <person name="Liao G."/>
            <person name="Miranda A."/>
            <person name="Mungall C.J."/>
            <person name="Nunoo J."/>
            <person name="Pacleb J."/>
            <person name="Paragas V."/>
            <person name="Park S."/>
            <person name="Patel S."/>
            <person name="Phouanenavong S."/>
            <person name="Wan K."/>
            <person name="Yu C."/>
            <person name="Lewis S.E."/>
            <person name="Rubin G.M."/>
            <person name="Celniker S."/>
            <person name="Booth B."/>
        </authorList>
    </citation>
    <scope>NUCLEOTIDE SEQUENCE [LARGE SCALE MRNA]</scope>
    <source>
        <strain evidence="8 9 10">Berkeley</strain>
        <tissue evidence="8">Embryo</tissue>
    </source>
</reference>
<reference evidence="5" key="6">
    <citation type="journal article" date="2016" name="PLoS Genet.">
        <title>Vimar Is a Novel Regulator of Mitochondrial Fission through Miro.</title>
        <authorList>
            <person name="Ding L."/>
            <person name="Lei Y."/>
            <person name="Han Y."/>
            <person name="Li Y."/>
            <person name="Ji X."/>
            <person name="Liu L."/>
        </authorList>
    </citation>
    <scope>FUNCTION</scope>
    <scope>INTERACTION WITH MIRO</scope>
    <scope>SUBCELLULAR LOCATION</scope>
    <scope>DISRUPTION PHENOTYPE</scope>
</reference>
<proteinExistence type="evidence at protein level"/>
<dbReference type="EMBL" id="AF034421">
    <property type="protein sequence ID" value="AAB87984.1"/>
    <property type="molecule type" value="mRNA"/>
</dbReference>
<dbReference type="EMBL" id="AE013599">
    <property type="protein sequence ID" value="AAS64794.1"/>
    <property type="molecule type" value="Genomic_DNA"/>
</dbReference>
<dbReference type="EMBL" id="AE013599">
    <property type="protein sequence ID" value="AAF57418.1"/>
    <property type="molecule type" value="Genomic_DNA"/>
</dbReference>
<dbReference type="EMBL" id="BT004891">
    <property type="protein sequence ID" value="AAO47869.1"/>
    <property type="molecule type" value="mRNA"/>
</dbReference>
<dbReference type="EMBL" id="AY069865">
    <property type="protein sequence ID" value="AAL40010.1"/>
    <property type="status" value="ALT_INIT"/>
    <property type="molecule type" value="mRNA"/>
</dbReference>
<dbReference type="EMBL" id="BT044558">
    <property type="protein sequence ID" value="ACI15753.1"/>
    <property type="molecule type" value="mRNA"/>
</dbReference>
<dbReference type="EMBL" id="BT125966">
    <property type="protein sequence ID" value="ADX35945.1"/>
    <property type="molecule type" value="mRNA"/>
</dbReference>
<dbReference type="RefSeq" id="NP_477305.1">
    <property type="nucleotide sequence ID" value="NM_057957.5"/>
</dbReference>
<dbReference type="RefSeq" id="NP_995767.1">
    <property type="nucleotide sequence ID" value="NM_206045.2"/>
</dbReference>
<dbReference type="SMR" id="A1Z6S7"/>
<dbReference type="FunCoup" id="A1Z6S7">
    <property type="interactions" value="2235"/>
</dbReference>
<dbReference type="IntAct" id="A1Z6S7">
    <property type="interactions" value="16"/>
</dbReference>
<dbReference type="STRING" id="7227.FBpp0085514"/>
<dbReference type="PaxDb" id="7227-FBpp0085514"/>
<dbReference type="DNASU" id="35609"/>
<dbReference type="EnsemblMetazoa" id="FBtr0086182">
    <property type="protein sequence ID" value="FBpp0085514"/>
    <property type="gene ID" value="FBgn0022960"/>
</dbReference>
<dbReference type="EnsemblMetazoa" id="FBtr0086183">
    <property type="protein sequence ID" value="FBpp0089175"/>
    <property type="gene ID" value="FBgn0022960"/>
</dbReference>
<dbReference type="GeneID" id="35609"/>
<dbReference type="KEGG" id="dme:Dmel_CG3572"/>
<dbReference type="UCSC" id="CG3572-RB">
    <property type="organism name" value="d. melanogaster"/>
</dbReference>
<dbReference type="UCSC" id="CG3572-RC">
    <property type="organism name" value="d. melanogaster"/>
</dbReference>
<dbReference type="AGR" id="FB:FBgn0022960"/>
<dbReference type="CTD" id="35609"/>
<dbReference type="FlyBase" id="FBgn0022960">
    <property type="gene designation" value="vimar"/>
</dbReference>
<dbReference type="VEuPathDB" id="VectorBase:FBgn0022960"/>
<dbReference type="eggNOG" id="KOG4500">
    <property type="taxonomic scope" value="Eukaryota"/>
</dbReference>
<dbReference type="GeneTree" id="ENSGT00390000014293"/>
<dbReference type="HOGENOM" id="CLU_021124_0_0_1"/>
<dbReference type="InParanoid" id="A1Z6S7"/>
<dbReference type="OMA" id="NGTEHQM"/>
<dbReference type="OrthoDB" id="26149at2759"/>
<dbReference type="PhylomeDB" id="A1Z6S7"/>
<dbReference type="BioGRID-ORCS" id="35609">
    <property type="hits" value="0 hits in 1 CRISPR screen"/>
</dbReference>
<dbReference type="ChiTaRS" id="vimar">
    <property type="organism name" value="fly"/>
</dbReference>
<dbReference type="GenomeRNAi" id="35609"/>
<dbReference type="PRO" id="PR:A1Z6S7"/>
<dbReference type="Proteomes" id="UP000000803">
    <property type="component" value="Chromosome 2R"/>
</dbReference>
<dbReference type="Bgee" id="FBgn0022960">
    <property type="expression patterns" value="Expressed in T neuron T5d (Drosophila) in embryonic/larval optic lobe (Drosophila) and 91 other cell types or tissues"/>
</dbReference>
<dbReference type="ExpressionAtlas" id="A1Z6S7">
    <property type="expression patterns" value="baseline and differential"/>
</dbReference>
<dbReference type="GO" id="GO:0005829">
    <property type="term" value="C:cytosol"/>
    <property type="evidence" value="ECO:0000314"/>
    <property type="project" value="UniProtKB"/>
</dbReference>
<dbReference type="GO" id="GO:0005783">
    <property type="term" value="C:endoplasmic reticulum"/>
    <property type="evidence" value="ECO:0000314"/>
    <property type="project" value="UniProtKB"/>
</dbReference>
<dbReference type="GO" id="GO:0005741">
    <property type="term" value="C:mitochondrial outer membrane"/>
    <property type="evidence" value="ECO:0000304"/>
    <property type="project" value="Reactome"/>
</dbReference>
<dbReference type="GO" id="GO:0005739">
    <property type="term" value="C:mitochondrion"/>
    <property type="evidence" value="ECO:0000314"/>
    <property type="project" value="UniProtKB"/>
</dbReference>
<dbReference type="GO" id="GO:0005886">
    <property type="term" value="C:plasma membrane"/>
    <property type="evidence" value="ECO:0007005"/>
    <property type="project" value="FlyBase"/>
</dbReference>
<dbReference type="GO" id="GO:0005085">
    <property type="term" value="F:guanyl-nucleotide exchange factor activity"/>
    <property type="evidence" value="ECO:0000316"/>
    <property type="project" value="UniProtKB"/>
</dbReference>
<dbReference type="GO" id="GO:0046716">
    <property type="term" value="P:muscle cell cellular homeostasis"/>
    <property type="evidence" value="ECO:0000315"/>
    <property type="project" value="FlyBase"/>
</dbReference>
<dbReference type="GO" id="GO:0010821">
    <property type="term" value="P:regulation of mitochondrion organization"/>
    <property type="evidence" value="ECO:0000316"/>
    <property type="project" value="UniProtKB"/>
</dbReference>
<dbReference type="GO" id="GO:0042052">
    <property type="term" value="P:rhabdomere development"/>
    <property type="evidence" value="ECO:0000315"/>
    <property type="project" value="FlyBase"/>
</dbReference>
<dbReference type="FunFam" id="1.25.10.10:FF:000858">
    <property type="entry name" value="Vimar"/>
    <property type="match status" value="1"/>
</dbReference>
<dbReference type="Gene3D" id="1.25.10.10">
    <property type="entry name" value="Leucine-rich Repeat Variant"/>
    <property type="match status" value="2"/>
</dbReference>
<dbReference type="InterPro" id="IPR011989">
    <property type="entry name" value="ARM-like"/>
</dbReference>
<dbReference type="InterPro" id="IPR016024">
    <property type="entry name" value="ARM-type_fold"/>
</dbReference>
<dbReference type="InterPro" id="IPR000225">
    <property type="entry name" value="Armadillo"/>
</dbReference>
<dbReference type="InterPro" id="IPR040144">
    <property type="entry name" value="RAP1GDS1"/>
</dbReference>
<dbReference type="PANTHER" id="PTHR10957">
    <property type="entry name" value="RAP1 GTPASE-GDP DISSOCIATION STIMULATOR 1"/>
    <property type="match status" value="1"/>
</dbReference>
<dbReference type="SMART" id="SM00185">
    <property type="entry name" value="ARM"/>
    <property type="match status" value="4"/>
</dbReference>
<dbReference type="SUPFAM" id="SSF48371">
    <property type="entry name" value="ARM repeat"/>
    <property type="match status" value="1"/>
</dbReference>
<organism evidence="12">
    <name type="scientific">Drosophila melanogaster</name>
    <name type="common">Fruit fly</name>
    <dbReference type="NCBI Taxonomy" id="7227"/>
    <lineage>
        <taxon>Eukaryota</taxon>
        <taxon>Metazoa</taxon>
        <taxon>Ecdysozoa</taxon>
        <taxon>Arthropoda</taxon>
        <taxon>Hexapoda</taxon>
        <taxon>Insecta</taxon>
        <taxon>Pterygota</taxon>
        <taxon>Neoptera</taxon>
        <taxon>Endopterygota</taxon>
        <taxon>Diptera</taxon>
        <taxon>Brachycera</taxon>
        <taxon>Muscomorpha</taxon>
        <taxon>Ephydroidea</taxon>
        <taxon>Drosophilidae</taxon>
        <taxon>Drosophila</taxon>
        <taxon>Sophophora</taxon>
    </lineage>
</organism>
<gene>
    <name evidence="11" type="primary">vimar</name>
    <name evidence="11" type="synonym">l(2)k16722</name>
    <name evidence="11" type="ORF">CG3572</name>
</gene>
<keyword id="KW-0963">Cytoplasm</keyword>
<keyword id="KW-0256">Endoplasmic reticulum</keyword>
<keyword id="KW-0344">Guanine-nucleotide releasing factor</keyword>
<keyword id="KW-0496">Mitochondrion</keyword>
<keyword id="KW-1185">Reference proteome</keyword>
<keyword id="KW-0677">Repeat</keyword>